<keyword id="KW-0012">Acyltransferase</keyword>
<keyword id="KW-0963">Cytoplasm</keyword>
<keyword id="KW-0276">Fatty acid metabolism</keyword>
<keyword id="KW-0442">Lipid degradation</keyword>
<keyword id="KW-0443">Lipid metabolism</keyword>
<keyword id="KW-1185">Reference proteome</keyword>
<keyword id="KW-0808">Transferase</keyword>
<organism>
    <name type="scientific">Photobacterium profundum (strain SS9)</name>
    <dbReference type="NCBI Taxonomy" id="298386"/>
    <lineage>
        <taxon>Bacteria</taxon>
        <taxon>Pseudomonadati</taxon>
        <taxon>Pseudomonadota</taxon>
        <taxon>Gammaproteobacteria</taxon>
        <taxon>Vibrionales</taxon>
        <taxon>Vibrionaceae</taxon>
        <taxon>Photobacterium</taxon>
    </lineage>
</organism>
<protein>
    <recommendedName>
        <fullName evidence="1">3-ketoacyl-CoA thiolase</fullName>
        <ecNumber evidence="1">2.3.1.16</ecNumber>
    </recommendedName>
    <alternativeName>
        <fullName evidence="1">Acetyl-CoA acyltransferase</fullName>
    </alternativeName>
    <alternativeName>
        <fullName evidence="1">Beta-ketothiolase</fullName>
    </alternativeName>
    <alternativeName>
        <fullName evidence="1">Fatty acid oxidation complex subunit beta</fullName>
    </alternativeName>
</protein>
<feature type="chain" id="PRO_0000206376" description="3-ketoacyl-CoA thiolase">
    <location>
        <begin position="1"/>
        <end position="387"/>
    </location>
</feature>
<feature type="active site" description="Acyl-thioester intermediate" evidence="1">
    <location>
        <position position="91"/>
    </location>
</feature>
<feature type="active site" description="Proton acceptor" evidence="1">
    <location>
        <position position="343"/>
    </location>
</feature>
<feature type="active site" description="Proton acceptor" evidence="1">
    <location>
        <position position="373"/>
    </location>
</feature>
<dbReference type="EC" id="2.3.1.16" evidence="1"/>
<dbReference type="EMBL" id="CR378663">
    <property type="protein sequence ID" value="CAG18518.1"/>
    <property type="molecule type" value="Genomic_DNA"/>
</dbReference>
<dbReference type="RefSeq" id="WP_011216899.1">
    <property type="nucleotide sequence ID" value="NC_006370.1"/>
</dbReference>
<dbReference type="SMR" id="Q6LW07"/>
<dbReference type="STRING" id="298386.PBPRA0063"/>
<dbReference type="KEGG" id="ppr:PBPRA0063"/>
<dbReference type="eggNOG" id="COG0183">
    <property type="taxonomic scope" value="Bacteria"/>
</dbReference>
<dbReference type="HOGENOM" id="CLU_031026_2_3_6"/>
<dbReference type="UniPathway" id="UPA00659"/>
<dbReference type="Proteomes" id="UP000000593">
    <property type="component" value="Chromosome 1"/>
</dbReference>
<dbReference type="GO" id="GO:0005737">
    <property type="term" value="C:cytoplasm"/>
    <property type="evidence" value="ECO:0007669"/>
    <property type="project" value="UniProtKB-SubCell"/>
</dbReference>
<dbReference type="GO" id="GO:0003988">
    <property type="term" value="F:acetyl-CoA C-acyltransferase activity"/>
    <property type="evidence" value="ECO:0007669"/>
    <property type="project" value="UniProtKB-UniRule"/>
</dbReference>
<dbReference type="GO" id="GO:0006635">
    <property type="term" value="P:fatty acid beta-oxidation"/>
    <property type="evidence" value="ECO:0007669"/>
    <property type="project" value="UniProtKB-UniRule"/>
</dbReference>
<dbReference type="GO" id="GO:0010124">
    <property type="term" value="P:phenylacetate catabolic process"/>
    <property type="evidence" value="ECO:0007669"/>
    <property type="project" value="TreeGrafter"/>
</dbReference>
<dbReference type="CDD" id="cd00751">
    <property type="entry name" value="thiolase"/>
    <property type="match status" value="1"/>
</dbReference>
<dbReference type="FunFam" id="3.40.47.10:FF:000010">
    <property type="entry name" value="Acetyl-CoA acetyltransferase (Thiolase)"/>
    <property type="match status" value="1"/>
</dbReference>
<dbReference type="Gene3D" id="3.40.47.10">
    <property type="match status" value="2"/>
</dbReference>
<dbReference type="HAMAP" id="MF_01620">
    <property type="entry name" value="FadA"/>
    <property type="match status" value="1"/>
</dbReference>
<dbReference type="InterPro" id="IPR012805">
    <property type="entry name" value="FadA"/>
</dbReference>
<dbReference type="InterPro" id="IPR002155">
    <property type="entry name" value="Thiolase"/>
</dbReference>
<dbReference type="InterPro" id="IPR016039">
    <property type="entry name" value="Thiolase-like"/>
</dbReference>
<dbReference type="InterPro" id="IPR050215">
    <property type="entry name" value="Thiolase-like_sf_Thiolase"/>
</dbReference>
<dbReference type="InterPro" id="IPR020615">
    <property type="entry name" value="Thiolase_acyl_enz_int_AS"/>
</dbReference>
<dbReference type="InterPro" id="IPR020610">
    <property type="entry name" value="Thiolase_AS"/>
</dbReference>
<dbReference type="InterPro" id="IPR020617">
    <property type="entry name" value="Thiolase_C"/>
</dbReference>
<dbReference type="InterPro" id="IPR020613">
    <property type="entry name" value="Thiolase_CS"/>
</dbReference>
<dbReference type="InterPro" id="IPR020616">
    <property type="entry name" value="Thiolase_N"/>
</dbReference>
<dbReference type="NCBIfam" id="TIGR01930">
    <property type="entry name" value="AcCoA-C-Actrans"/>
    <property type="match status" value="1"/>
</dbReference>
<dbReference type="NCBIfam" id="TIGR02445">
    <property type="entry name" value="fadA"/>
    <property type="match status" value="1"/>
</dbReference>
<dbReference type="NCBIfam" id="NF006510">
    <property type="entry name" value="PRK08947.1"/>
    <property type="match status" value="1"/>
</dbReference>
<dbReference type="PANTHER" id="PTHR43853:SF11">
    <property type="entry name" value="3-KETOACYL-COA THIOLASE FADA"/>
    <property type="match status" value="1"/>
</dbReference>
<dbReference type="PANTHER" id="PTHR43853">
    <property type="entry name" value="3-KETOACYL-COA THIOLASE, PEROXISOMAL"/>
    <property type="match status" value="1"/>
</dbReference>
<dbReference type="Pfam" id="PF02803">
    <property type="entry name" value="Thiolase_C"/>
    <property type="match status" value="1"/>
</dbReference>
<dbReference type="Pfam" id="PF00108">
    <property type="entry name" value="Thiolase_N"/>
    <property type="match status" value="1"/>
</dbReference>
<dbReference type="PIRSF" id="PIRSF000429">
    <property type="entry name" value="Ac-CoA_Ac_transf"/>
    <property type="match status" value="1"/>
</dbReference>
<dbReference type="SUPFAM" id="SSF53901">
    <property type="entry name" value="Thiolase-like"/>
    <property type="match status" value="2"/>
</dbReference>
<dbReference type="PROSITE" id="PS00098">
    <property type="entry name" value="THIOLASE_1"/>
    <property type="match status" value="1"/>
</dbReference>
<dbReference type="PROSITE" id="PS00737">
    <property type="entry name" value="THIOLASE_2"/>
    <property type="match status" value="1"/>
</dbReference>
<dbReference type="PROSITE" id="PS00099">
    <property type="entry name" value="THIOLASE_3"/>
    <property type="match status" value="1"/>
</dbReference>
<accession>Q6LW07</accession>
<evidence type="ECO:0000255" key="1">
    <source>
        <dbReference type="HAMAP-Rule" id="MF_01620"/>
    </source>
</evidence>
<sequence>MNNVVIVDCIRTPMGRSKAGAFRNVRAEDLSAHLMKGLISRNPQLDPNSIEDIYWGCVQQTLEQGFNVARNASLLAGIPHTVAATTVNRLCGSSMQALHDATRAIMVGDAETCIIGGVEHMGHVPMNHGVDFHPGMSKSVAKAAGMMGLTAEMLGRMHGISRQMQDEFAARSHQRAHAATIEGRFKNEILPIEGHDENGILKLYDYDEVIRPETTVEGLSNLRPAFDPVNGTVTAGSSSALSDGASAMLVMSEHRAKELGLTIRARVKSMAVAGCDPSIMGYGPVPATQKALKRAGLSIDDIGMVELNEAFAAQSLPCAKDLGLLDKIDEKVNLNGGAIALGHPLGCSGSRISTTLINQMEHHDVQFGLATMCIGLGQGIATVFERV</sequence>
<name>FADA_PHOPR</name>
<proteinExistence type="inferred from homology"/>
<comment type="function">
    <text evidence="1">Catalyzes the final step of fatty acid oxidation in which acetyl-CoA is released and the CoA ester of a fatty acid two carbons shorter is formed.</text>
</comment>
<comment type="catalytic activity">
    <reaction evidence="1">
        <text>an acyl-CoA + acetyl-CoA = a 3-oxoacyl-CoA + CoA</text>
        <dbReference type="Rhea" id="RHEA:21564"/>
        <dbReference type="ChEBI" id="CHEBI:57287"/>
        <dbReference type="ChEBI" id="CHEBI:57288"/>
        <dbReference type="ChEBI" id="CHEBI:58342"/>
        <dbReference type="ChEBI" id="CHEBI:90726"/>
        <dbReference type="EC" id="2.3.1.16"/>
    </reaction>
</comment>
<comment type="pathway">
    <text evidence="1">Lipid metabolism; fatty acid beta-oxidation.</text>
</comment>
<comment type="subunit">
    <text evidence="1">Heterotetramer of two alpha chains (FadB) and two beta chains (FadA).</text>
</comment>
<comment type="subcellular location">
    <subcellularLocation>
        <location evidence="1">Cytoplasm</location>
    </subcellularLocation>
</comment>
<comment type="similarity">
    <text evidence="1">Belongs to the thiolase-like superfamily. Thiolase family.</text>
</comment>
<reference key="1">
    <citation type="journal article" date="2005" name="Science">
        <title>Life at depth: Photobacterium profundum genome sequence and expression analysis.</title>
        <authorList>
            <person name="Vezzi A."/>
            <person name="Campanaro S."/>
            <person name="D'Angelo M."/>
            <person name="Simonato F."/>
            <person name="Vitulo N."/>
            <person name="Lauro F.M."/>
            <person name="Cestaro A."/>
            <person name="Malacrida G."/>
            <person name="Simionati B."/>
            <person name="Cannata N."/>
            <person name="Romualdi C."/>
            <person name="Bartlett D.H."/>
            <person name="Valle G."/>
        </authorList>
    </citation>
    <scope>NUCLEOTIDE SEQUENCE [LARGE SCALE GENOMIC DNA]</scope>
    <source>
        <strain>ATCC BAA-1253 / SS9</strain>
    </source>
</reference>
<gene>
    <name evidence="1" type="primary">fadA</name>
    <name type="ordered locus">PBPRA0063</name>
</gene>